<feature type="chain" id="PRO_0000138782" description="Large ribosomal subunit protein eL40">
    <location>
        <begin position="1"/>
        <end position="49"/>
    </location>
</feature>
<accession>Q8TXM1</accession>
<sequence length="49" mass="5524">MAKFPEAEARIFNKLICMKCNARNPPDATKCRKCGYKGLRPKAREPRGG</sequence>
<dbReference type="EMBL" id="AE009439">
    <property type="protein sequence ID" value="AAM01856.1"/>
    <property type="molecule type" value="Genomic_DNA"/>
</dbReference>
<dbReference type="SMR" id="Q8TXM1"/>
<dbReference type="FunCoup" id="Q8TXM1">
    <property type="interactions" value="65"/>
</dbReference>
<dbReference type="STRING" id="190192.MK0641"/>
<dbReference type="PaxDb" id="190192-MK0641"/>
<dbReference type="EnsemblBacteria" id="AAM01856">
    <property type="protein sequence ID" value="AAM01856"/>
    <property type="gene ID" value="MK0641"/>
</dbReference>
<dbReference type="KEGG" id="mka:MK0641"/>
<dbReference type="PATRIC" id="fig|190192.8.peg.680"/>
<dbReference type="HOGENOM" id="CLU_205640_0_0_2"/>
<dbReference type="InParanoid" id="Q8TXM1"/>
<dbReference type="OrthoDB" id="45138at2157"/>
<dbReference type="Proteomes" id="UP000001826">
    <property type="component" value="Chromosome"/>
</dbReference>
<dbReference type="GO" id="GO:1990904">
    <property type="term" value="C:ribonucleoprotein complex"/>
    <property type="evidence" value="ECO:0007669"/>
    <property type="project" value="UniProtKB-KW"/>
</dbReference>
<dbReference type="GO" id="GO:0005840">
    <property type="term" value="C:ribosome"/>
    <property type="evidence" value="ECO:0007669"/>
    <property type="project" value="UniProtKB-KW"/>
</dbReference>
<dbReference type="GO" id="GO:0003735">
    <property type="term" value="F:structural constituent of ribosome"/>
    <property type="evidence" value="ECO:0007669"/>
    <property type="project" value="InterPro"/>
</dbReference>
<dbReference type="GO" id="GO:0006412">
    <property type="term" value="P:translation"/>
    <property type="evidence" value="ECO:0007669"/>
    <property type="project" value="UniProtKB-UniRule"/>
</dbReference>
<dbReference type="Gene3D" id="4.10.1060.50">
    <property type="match status" value="1"/>
</dbReference>
<dbReference type="HAMAP" id="MF_00788">
    <property type="entry name" value="Ribosomal_eL40"/>
    <property type="match status" value="1"/>
</dbReference>
<dbReference type="InterPro" id="IPR023657">
    <property type="entry name" value="Ribosomal_eL40_arc"/>
</dbReference>
<dbReference type="InterPro" id="IPR001975">
    <property type="entry name" value="Ribosomal_eL40_dom"/>
</dbReference>
<dbReference type="InterPro" id="IPR038587">
    <property type="entry name" value="Ribosomal_eL40_sf"/>
</dbReference>
<dbReference type="InterPro" id="IPR011332">
    <property type="entry name" value="Ribosomal_zn-bd"/>
</dbReference>
<dbReference type="NCBIfam" id="NF003161">
    <property type="entry name" value="PRK04136.1"/>
    <property type="match status" value="1"/>
</dbReference>
<dbReference type="PANTHER" id="PTHR39649">
    <property type="entry name" value="50S RIBOSOMAL PROTEIN L40E"/>
    <property type="match status" value="1"/>
</dbReference>
<dbReference type="PANTHER" id="PTHR39649:SF1">
    <property type="entry name" value="LARGE RIBOSOMAL SUBUNIT PROTEIN EL40"/>
    <property type="match status" value="1"/>
</dbReference>
<dbReference type="Pfam" id="PF01020">
    <property type="entry name" value="Ribosomal_L40e"/>
    <property type="match status" value="1"/>
</dbReference>
<dbReference type="SMART" id="SM01377">
    <property type="entry name" value="Ribosomal_L40e"/>
    <property type="match status" value="1"/>
</dbReference>
<dbReference type="SUPFAM" id="SSF57829">
    <property type="entry name" value="Zn-binding ribosomal proteins"/>
    <property type="match status" value="1"/>
</dbReference>
<keyword id="KW-1185">Reference proteome</keyword>
<keyword id="KW-0687">Ribonucleoprotein</keyword>
<keyword id="KW-0689">Ribosomal protein</keyword>
<evidence type="ECO:0000255" key="1">
    <source>
        <dbReference type="HAMAP-Rule" id="MF_00788"/>
    </source>
</evidence>
<evidence type="ECO:0000305" key="2"/>
<protein>
    <recommendedName>
        <fullName evidence="1">Large ribosomal subunit protein eL40</fullName>
    </recommendedName>
    <alternativeName>
        <fullName evidence="2">50S ribosomal protein L40e</fullName>
    </alternativeName>
</protein>
<comment type="similarity">
    <text evidence="1">Belongs to the eukaryotic ribosomal protein eL40 family.</text>
</comment>
<gene>
    <name evidence="1" type="primary">rpl40e</name>
    <name type="ordered locus">MK0641</name>
</gene>
<name>RL40_METKA</name>
<organism>
    <name type="scientific">Methanopyrus kandleri (strain AV19 / DSM 6324 / JCM 9639 / NBRC 100938)</name>
    <dbReference type="NCBI Taxonomy" id="190192"/>
    <lineage>
        <taxon>Archaea</taxon>
        <taxon>Methanobacteriati</taxon>
        <taxon>Methanobacteriota</taxon>
        <taxon>Methanomada group</taxon>
        <taxon>Methanopyri</taxon>
        <taxon>Methanopyrales</taxon>
        <taxon>Methanopyraceae</taxon>
        <taxon>Methanopyrus</taxon>
    </lineage>
</organism>
<proteinExistence type="inferred from homology"/>
<reference key="1">
    <citation type="journal article" date="2002" name="Proc. Natl. Acad. Sci. U.S.A.">
        <title>The complete genome of hyperthermophile Methanopyrus kandleri AV19 and monophyly of archaeal methanogens.</title>
        <authorList>
            <person name="Slesarev A.I."/>
            <person name="Mezhevaya K.V."/>
            <person name="Makarova K.S."/>
            <person name="Polushin N.N."/>
            <person name="Shcherbinina O.V."/>
            <person name="Shakhova V.V."/>
            <person name="Belova G.I."/>
            <person name="Aravind L."/>
            <person name="Natale D.A."/>
            <person name="Rogozin I.B."/>
            <person name="Tatusov R.L."/>
            <person name="Wolf Y.I."/>
            <person name="Stetter K.O."/>
            <person name="Malykh A.G."/>
            <person name="Koonin E.V."/>
            <person name="Kozyavkin S.A."/>
        </authorList>
    </citation>
    <scope>NUCLEOTIDE SEQUENCE [LARGE SCALE GENOMIC DNA]</scope>
    <source>
        <strain>AV19 / DSM 6324 / JCM 9639 / NBRC 100938</strain>
    </source>
</reference>